<sequence>MLSASDKANVKAIWSKVCVHAEEYGAETLERMFTVYPSTKTYFPHFDLTHGSAQVKAHGKKVVNAMGEAVNHLDDMAGALLKLSDLHAQKLRVDPVNFKLLAQCFLVVLGVHHPAALTPEVHASLDKFLCAVGLVLTAKYR</sequence>
<name>HBA_SPHPU</name>
<evidence type="ECO:0000255" key="1">
    <source>
        <dbReference type="PROSITE-ProRule" id="PRU00238"/>
    </source>
</evidence>
<accession>P10059</accession>
<dbReference type="PIR" id="S01136">
    <property type="entry name" value="HATJA"/>
</dbReference>
<dbReference type="SMR" id="P10059"/>
<dbReference type="Proteomes" id="UP000694392">
    <property type="component" value="Unplaced"/>
</dbReference>
<dbReference type="GO" id="GO:0072562">
    <property type="term" value="C:blood microparticle"/>
    <property type="evidence" value="ECO:0007669"/>
    <property type="project" value="TreeGrafter"/>
</dbReference>
<dbReference type="GO" id="GO:0031838">
    <property type="term" value="C:haptoglobin-hemoglobin complex"/>
    <property type="evidence" value="ECO:0007669"/>
    <property type="project" value="TreeGrafter"/>
</dbReference>
<dbReference type="GO" id="GO:0005833">
    <property type="term" value="C:hemoglobin complex"/>
    <property type="evidence" value="ECO:0007669"/>
    <property type="project" value="InterPro"/>
</dbReference>
<dbReference type="GO" id="GO:0031720">
    <property type="term" value="F:haptoglobin binding"/>
    <property type="evidence" value="ECO:0007669"/>
    <property type="project" value="TreeGrafter"/>
</dbReference>
<dbReference type="GO" id="GO:0020037">
    <property type="term" value="F:heme binding"/>
    <property type="evidence" value="ECO:0007669"/>
    <property type="project" value="InterPro"/>
</dbReference>
<dbReference type="GO" id="GO:0005506">
    <property type="term" value="F:iron ion binding"/>
    <property type="evidence" value="ECO:0007669"/>
    <property type="project" value="InterPro"/>
</dbReference>
<dbReference type="GO" id="GO:0043177">
    <property type="term" value="F:organic acid binding"/>
    <property type="evidence" value="ECO:0007669"/>
    <property type="project" value="TreeGrafter"/>
</dbReference>
<dbReference type="GO" id="GO:0019825">
    <property type="term" value="F:oxygen binding"/>
    <property type="evidence" value="ECO:0007669"/>
    <property type="project" value="InterPro"/>
</dbReference>
<dbReference type="GO" id="GO:0005344">
    <property type="term" value="F:oxygen carrier activity"/>
    <property type="evidence" value="ECO:0007669"/>
    <property type="project" value="UniProtKB-KW"/>
</dbReference>
<dbReference type="GO" id="GO:0004601">
    <property type="term" value="F:peroxidase activity"/>
    <property type="evidence" value="ECO:0007669"/>
    <property type="project" value="TreeGrafter"/>
</dbReference>
<dbReference type="GO" id="GO:0042744">
    <property type="term" value="P:hydrogen peroxide catabolic process"/>
    <property type="evidence" value="ECO:0007669"/>
    <property type="project" value="TreeGrafter"/>
</dbReference>
<dbReference type="CDD" id="cd08927">
    <property type="entry name" value="Hb-alpha-like"/>
    <property type="match status" value="1"/>
</dbReference>
<dbReference type="FunFam" id="1.10.490.10:FF:000002">
    <property type="entry name" value="Hemoglobin subunit alpha"/>
    <property type="match status" value="1"/>
</dbReference>
<dbReference type="Gene3D" id="1.10.490.10">
    <property type="entry name" value="Globins"/>
    <property type="match status" value="1"/>
</dbReference>
<dbReference type="InterPro" id="IPR000971">
    <property type="entry name" value="Globin"/>
</dbReference>
<dbReference type="InterPro" id="IPR009050">
    <property type="entry name" value="Globin-like_sf"/>
</dbReference>
<dbReference type="InterPro" id="IPR012292">
    <property type="entry name" value="Globin/Proto"/>
</dbReference>
<dbReference type="InterPro" id="IPR002338">
    <property type="entry name" value="Hemoglobin_a-typ"/>
</dbReference>
<dbReference type="InterPro" id="IPR050056">
    <property type="entry name" value="Hemoglobin_oxygen_transport"/>
</dbReference>
<dbReference type="InterPro" id="IPR002339">
    <property type="entry name" value="Hemoglobin_pi"/>
</dbReference>
<dbReference type="PANTHER" id="PTHR11442">
    <property type="entry name" value="HEMOGLOBIN FAMILY MEMBER"/>
    <property type="match status" value="1"/>
</dbReference>
<dbReference type="PANTHER" id="PTHR11442:SF48">
    <property type="entry name" value="HEMOGLOBIN SUBUNIT ALPHA"/>
    <property type="match status" value="1"/>
</dbReference>
<dbReference type="Pfam" id="PF00042">
    <property type="entry name" value="Globin"/>
    <property type="match status" value="1"/>
</dbReference>
<dbReference type="PRINTS" id="PR00612">
    <property type="entry name" value="ALPHAHAEM"/>
</dbReference>
<dbReference type="PRINTS" id="PR00815">
    <property type="entry name" value="PIHAEM"/>
</dbReference>
<dbReference type="SUPFAM" id="SSF46458">
    <property type="entry name" value="Globin-like"/>
    <property type="match status" value="1"/>
</dbReference>
<dbReference type="PROSITE" id="PS01033">
    <property type="entry name" value="GLOBIN"/>
    <property type="match status" value="1"/>
</dbReference>
<feature type="chain" id="PRO_0000052767" description="Hemoglobin subunit alpha-A">
    <location>
        <begin position="1"/>
        <end position="141"/>
    </location>
</feature>
<feature type="domain" description="Globin" evidence="1">
    <location>
        <begin position="1"/>
        <end position="141"/>
    </location>
</feature>
<feature type="binding site" evidence="1">
    <location>
        <position position="58"/>
    </location>
    <ligand>
        <name>O2</name>
        <dbReference type="ChEBI" id="CHEBI:15379"/>
    </ligand>
</feature>
<feature type="binding site" description="proximal binding residue" evidence="1">
    <location>
        <position position="87"/>
    </location>
    <ligand>
        <name>heme b</name>
        <dbReference type="ChEBI" id="CHEBI:60344"/>
    </ligand>
    <ligandPart>
        <name>Fe</name>
        <dbReference type="ChEBI" id="CHEBI:18248"/>
    </ligandPart>
</feature>
<comment type="function">
    <text>Involved in oxygen transport from the lung to the various peripheral tissues.</text>
</comment>
<comment type="subunit">
    <text>There are three forms of hemoglobin in Sphenodon: A, A' and D. Hb A is a tetramer of two alpha-A and two beta-1, Hb A' is a tetramer of two alpha-a and two beta-2, Hb D is a tetramer of two alpha-D and two beta-2.</text>
</comment>
<comment type="tissue specificity">
    <text>Red blood cells.</text>
</comment>
<comment type="miscellaneous">
    <text>Sphenodon Hbs have properties not found in other reptiles: poor cooperativity, high affinity for oxygen, small Bohr and haldane effects, appreciable phosphate effects (those properties are also found in the Hbs of primitive urodele and caecilian amphibians).</text>
</comment>
<comment type="similarity">
    <text evidence="1">Belongs to the globin family.</text>
</comment>
<reference key="1">
    <citation type="journal article" date="1988" name="Biol. Chem. Hoppe-Seyler">
        <title>Primary structure of the hemoglobins from Sphenodon (Sphenodon punctatus, Tuatara, Rynchocephalia). Evidence for the expression of alpha D-gene.</title>
        <authorList>
            <person name="Abbasi A."/>
            <person name="Wells R.M.G."/>
            <person name="Brittain T."/>
            <person name="Braunitzer G."/>
        </authorList>
    </citation>
    <scope>PROTEIN SEQUENCE</scope>
</reference>
<protein>
    <recommendedName>
        <fullName>Hemoglobin subunit alpha-A</fullName>
    </recommendedName>
    <alternativeName>
        <fullName>Alpha-A-globin</fullName>
    </alternativeName>
    <alternativeName>
        <fullName>Hemoglobin alpha-A chain</fullName>
    </alternativeName>
</protein>
<organism>
    <name type="scientific">Sphenodon punctatus</name>
    <name type="common">Tuatara</name>
    <name type="synonym">Hatteria punctata</name>
    <dbReference type="NCBI Taxonomy" id="8508"/>
    <lineage>
        <taxon>Eukaryota</taxon>
        <taxon>Metazoa</taxon>
        <taxon>Chordata</taxon>
        <taxon>Craniata</taxon>
        <taxon>Vertebrata</taxon>
        <taxon>Euteleostomi</taxon>
        <taxon>Lepidosauria</taxon>
        <taxon>Sphenodontia</taxon>
        <taxon>Sphenodontidae</taxon>
        <taxon>Sphenodon</taxon>
    </lineage>
</organism>
<gene>
    <name type="primary">HBAA</name>
</gene>
<proteinExistence type="evidence at protein level"/>
<keyword id="KW-0903">Direct protein sequencing</keyword>
<keyword id="KW-0349">Heme</keyword>
<keyword id="KW-0408">Iron</keyword>
<keyword id="KW-0479">Metal-binding</keyword>
<keyword id="KW-0561">Oxygen transport</keyword>
<keyword id="KW-1185">Reference proteome</keyword>
<keyword id="KW-0813">Transport</keyword>